<protein>
    <recommendedName>
        <fullName evidence="2">Tachykinin-related peptide 2</fullName>
        <shortName evidence="2">TKRP-2</shortName>
    </recommendedName>
</protein>
<organism>
    <name type="scientific">Nezara viridula</name>
    <name type="common">Southern green stink bug</name>
    <name type="synonym">Cimex viridulus</name>
    <dbReference type="NCBI Taxonomy" id="85310"/>
    <lineage>
        <taxon>Eukaryota</taxon>
        <taxon>Metazoa</taxon>
        <taxon>Ecdysozoa</taxon>
        <taxon>Arthropoda</taxon>
        <taxon>Hexapoda</taxon>
        <taxon>Insecta</taxon>
        <taxon>Pterygota</taxon>
        <taxon>Neoptera</taxon>
        <taxon>Paraneoptera</taxon>
        <taxon>Hemiptera</taxon>
        <taxon>Heteroptera</taxon>
        <taxon>Panheteroptera</taxon>
        <taxon>Pentatomomorpha</taxon>
        <taxon>Pentatomoidea</taxon>
        <taxon>Pentatomidae</taxon>
        <taxon>Pentatominae</taxon>
        <taxon>Nezara</taxon>
    </lineage>
</organism>
<proteinExistence type="evidence at protein level"/>
<accession>P86576</accession>
<reference evidence="3" key="1">
    <citation type="journal article" date="2009" name="Peptides">
        <title>Neuropeptides in Heteroptera: identification of allatotropin-related peptide and tachykinin-related peptides using MALDI-TOF mass spectrometry.</title>
        <authorList>
            <person name="Neupert S."/>
            <person name="Russell W.K."/>
            <person name="Russell D.H."/>
            <person name="Lopez J.D. Jr."/>
            <person name="Predel R."/>
            <person name="Nachman R.J."/>
        </authorList>
    </citation>
    <scope>PROTEIN SEQUENCE</scope>
    <scope>SUBCELLULAR LOCATION</scope>
    <scope>TISSUE SPECIFICITY</scope>
    <scope>AMIDATION AT ARG-10</scope>
    <source>
        <tissue evidence="1">Antennal lobe</tissue>
    </source>
</reference>
<sequence length="10" mass="1024">APAAGFFGMR</sequence>
<name>TRP2_NEZVI</name>
<dbReference type="GO" id="GO:0005576">
    <property type="term" value="C:extracellular region"/>
    <property type="evidence" value="ECO:0007005"/>
    <property type="project" value="UniProtKB"/>
</dbReference>
<dbReference type="GO" id="GO:0007218">
    <property type="term" value="P:neuropeptide signaling pathway"/>
    <property type="evidence" value="ECO:0007669"/>
    <property type="project" value="UniProtKB-KW"/>
</dbReference>
<feature type="peptide" id="PRO_0000395645" description="Tachykinin-related peptide 2" evidence="1">
    <location>
        <begin position="1"/>
        <end position="10"/>
    </location>
</feature>
<feature type="modified residue" description="Arginine amide" evidence="1">
    <location>
        <position position="10"/>
    </location>
</feature>
<comment type="subcellular location">
    <subcellularLocation>
        <location evidence="1 3">Secreted</location>
    </subcellularLocation>
</comment>
<comment type="tissue specificity">
    <text evidence="1">Expressed in the antennal lobe (at protein level).</text>
</comment>
<keyword id="KW-0027">Amidation</keyword>
<keyword id="KW-0903">Direct protein sequencing</keyword>
<keyword id="KW-0527">Neuropeptide</keyword>
<keyword id="KW-0964">Secreted</keyword>
<evidence type="ECO:0000269" key="1">
    <source>
    </source>
</evidence>
<evidence type="ECO:0000303" key="2">
    <source>
    </source>
</evidence>
<evidence type="ECO:0000305" key="3"/>